<evidence type="ECO:0000250" key="1"/>
<evidence type="ECO:0000255" key="2"/>
<evidence type="ECO:0000305" key="3"/>
<dbReference type="EMBL" id="AJ235270">
    <property type="protein sequence ID" value="CAA14500.1"/>
    <property type="molecule type" value="Genomic_DNA"/>
</dbReference>
<dbReference type="PIR" id="E71710">
    <property type="entry name" value="E71710"/>
</dbReference>
<dbReference type="RefSeq" id="NP_220423.1">
    <property type="nucleotide sequence ID" value="NC_000963.1"/>
</dbReference>
<dbReference type="RefSeq" id="WP_004596661.1">
    <property type="nucleotide sequence ID" value="NC_000963.1"/>
</dbReference>
<dbReference type="SMR" id="Q9ZEB6"/>
<dbReference type="STRING" id="272947.gene:17555112"/>
<dbReference type="EnsemblBacteria" id="CAA14500">
    <property type="protein sequence ID" value="CAA14500"/>
    <property type="gene ID" value="CAA14500"/>
</dbReference>
<dbReference type="GeneID" id="57569157"/>
<dbReference type="KEGG" id="rpr:RP029"/>
<dbReference type="PATRIC" id="fig|272947.5.peg.29"/>
<dbReference type="eggNOG" id="COG1195">
    <property type="taxonomic scope" value="Bacteria"/>
</dbReference>
<dbReference type="HOGENOM" id="CLU_040267_2_0_5"/>
<dbReference type="OrthoDB" id="9803889at2"/>
<dbReference type="Proteomes" id="UP000002480">
    <property type="component" value="Chromosome"/>
</dbReference>
<dbReference type="GO" id="GO:0005737">
    <property type="term" value="C:cytoplasm"/>
    <property type="evidence" value="ECO:0007669"/>
    <property type="project" value="UniProtKB-SubCell"/>
</dbReference>
<dbReference type="GO" id="GO:0005524">
    <property type="term" value="F:ATP binding"/>
    <property type="evidence" value="ECO:0007669"/>
    <property type="project" value="UniProtKB-UniRule"/>
</dbReference>
<dbReference type="GO" id="GO:0003697">
    <property type="term" value="F:single-stranded DNA binding"/>
    <property type="evidence" value="ECO:0007669"/>
    <property type="project" value="UniProtKB-UniRule"/>
</dbReference>
<dbReference type="GO" id="GO:0006260">
    <property type="term" value="P:DNA replication"/>
    <property type="evidence" value="ECO:0007669"/>
    <property type="project" value="UniProtKB-UniRule"/>
</dbReference>
<dbReference type="GO" id="GO:0000731">
    <property type="term" value="P:DNA synthesis involved in DNA repair"/>
    <property type="evidence" value="ECO:0007669"/>
    <property type="project" value="TreeGrafter"/>
</dbReference>
<dbReference type="GO" id="GO:0006302">
    <property type="term" value="P:double-strand break repair"/>
    <property type="evidence" value="ECO:0007669"/>
    <property type="project" value="TreeGrafter"/>
</dbReference>
<dbReference type="GO" id="GO:0009432">
    <property type="term" value="P:SOS response"/>
    <property type="evidence" value="ECO:0007669"/>
    <property type="project" value="UniProtKB-UniRule"/>
</dbReference>
<dbReference type="Gene3D" id="3.40.50.300">
    <property type="entry name" value="P-loop containing nucleotide triphosphate hydrolases"/>
    <property type="match status" value="1"/>
</dbReference>
<dbReference type="Gene3D" id="1.20.1050.90">
    <property type="entry name" value="RecF/RecN/SMC, N-terminal domain"/>
    <property type="match status" value="1"/>
</dbReference>
<dbReference type="HAMAP" id="MF_00365">
    <property type="entry name" value="RecF"/>
    <property type="match status" value="1"/>
</dbReference>
<dbReference type="InterPro" id="IPR001238">
    <property type="entry name" value="DNA-binding_RecF"/>
</dbReference>
<dbReference type="InterPro" id="IPR018078">
    <property type="entry name" value="DNA-binding_RecF_CS"/>
</dbReference>
<dbReference type="InterPro" id="IPR027417">
    <property type="entry name" value="P-loop_NTPase"/>
</dbReference>
<dbReference type="InterPro" id="IPR003395">
    <property type="entry name" value="RecF/RecN/SMC_N"/>
</dbReference>
<dbReference type="InterPro" id="IPR042174">
    <property type="entry name" value="RecF_2"/>
</dbReference>
<dbReference type="NCBIfam" id="TIGR00611">
    <property type="entry name" value="recf"/>
    <property type="match status" value="1"/>
</dbReference>
<dbReference type="PANTHER" id="PTHR32182">
    <property type="entry name" value="DNA REPLICATION AND REPAIR PROTEIN RECF"/>
    <property type="match status" value="1"/>
</dbReference>
<dbReference type="PANTHER" id="PTHR32182:SF0">
    <property type="entry name" value="DNA REPLICATION AND REPAIR PROTEIN RECF"/>
    <property type="match status" value="1"/>
</dbReference>
<dbReference type="Pfam" id="PF02463">
    <property type="entry name" value="SMC_N"/>
    <property type="match status" value="1"/>
</dbReference>
<dbReference type="SUPFAM" id="SSF52540">
    <property type="entry name" value="P-loop containing nucleoside triphosphate hydrolases"/>
    <property type="match status" value="1"/>
</dbReference>
<dbReference type="PROSITE" id="PS00617">
    <property type="entry name" value="RECF_1"/>
    <property type="match status" value="1"/>
</dbReference>
<dbReference type="PROSITE" id="PS00618">
    <property type="entry name" value="RECF_2"/>
    <property type="match status" value="1"/>
</dbReference>
<feature type="chain" id="PRO_0000196450" description="DNA replication and repair protein RecF">
    <location>
        <begin position="1"/>
        <end position="360"/>
    </location>
</feature>
<feature type="binding site" evidence="2">
    <location>
        <begin position="33"/>
        <end position="40"/>
    </location>
    <ligand>
        <name>ATP</name>
        <dbReference type="ChEBI" id="CHEBI:30616"/>
    </ligand>
</feature>
<keyword id="KW-0067">ATP-binding</keyword>
<keyword id="KW-0963">Cytoplasm</keyword>
<keyword id="KW-0227">DNA damage</keyword>
<keyword id="KW-0234">DNA repair</keyword>
<keyword id="KW-0235">DNA replication</keyword>
<keyword id="KW-0238">DNA-binding</keyword>
<keyword id="KW-0547">Nucleotide-binding</keyword>
<keyword id="KW-1185">Reference proteome</keyword>
<keyword id="KW-0742">SOS response</keyword>
<name>RECF_RICPR</name>
<gene>
    <name type="primary">recF</name>
    <name type="ordered locus">RP029</name>
</gene>
<sequence>MKNIFLHSLTLENYRNFKNLELKTDNTPIILTGENGSGKTNILEAISLFYPGRGLRSSKLTDICKTSEDYCKVKTLLQSKLGLAELSTHIKRSSNRRITEYNASKIANNELSKFTNMVWLTPQMEGIFTSSSTDRRKFLDRIVYNFDTKHAALLNKYEYYMHERNKILAEDIRDNNWLKIIEEKMADISNNIANNRLKTIRFIQQAIDDIENEFPKADLSIDGIIEQKILNVEGDIVNFIITELYKTRSKDKLLGRTSFGIHKSDFLVKHQKKNILAKFCSTGEQKAILIAIILAEINSTIKLTKITPILLLDEIFVHLDDKRRQYLMGFFNALNIQLWVTATDLDGIENFANKAQLIKL</sequence>
<organism>
    <name type="scientific">Rickettsia prowazekii (strain Madrid E)</name>
    <dbReference type="NCBI Taxonomy" id="272947"/>
    <lineage>
        <taxon>Bacteria</taxon>
        <taxon>Pseudomonadati</taxon>
        <taxon>Pseudomonadota</taxon>
        <taxon>Alphaproteobacteria</taxon>
        <taxon>Rickettsiales</taxon>
        <taxon>Rickettsiaceae</taxon>
        <taxon>Rickettsieae</taxon>
        <taxon>Rickettsia</taxon>
        <taxon>typhus group</taxon>
    </lineage>
</organism>
<reference key="1">
    <citation type="journal article" date="1998" name="Nature">
        <title>The genome sequence of Rickettsia prowazekii and the origin of mitochondria.</title>
        <authorList>
            <person name="Andersson S.G.E."/>
            <person name="Zomorodipour A."/>
            <person name="Andersson J.O."/>
            <person name="Sicheritz-Ponten T."/>
            <person name="Alsmark U.C.M."/>
            <person name="Podowski R.M."/>
            <person name="Naeslund A.K."/>
            <person name="Eriksson A.-S."/>
            <person name="Winkler H.H."/>
            <person name="Kurland C.G."/>
        </authorList>
    </citation>
    <scope>NUCLEOTIDE SEQUENCE [LARGE SCALE GENOMIC DNA]</scope>
    <source>
        <strain>Madrid E</strain>
    </source>
</reference>
<comment type="function">
    <text evidence="1">The RecF protein is involved in DNA metabolism; it is required for DNA replication and normal SOS inducibility. RecF binds preferentially to single-stranded, linear DNA. It also seems to bind ATP (By similarity).</text>
</comment>
<comment type="subcellular location">
    <subcellularLocation>
        <location evidence="1">Cytoplasm</location>
    </subcellularLocation>
</comment>
<comment type="similarity">
    <text evidence="3">Belongs to the RecF family.</text>
</comment>
<protein>
    <recommendedName>
        <fullName>DNA replication and repair protein RecF</fullName>
    </recommendedName>
</protein>
<accession>Q9ZEB6</accession>
<proteinExistence type="inferred from homology"/>